<name>PGKT_THEMA</name>
<proteinExistence type="evidence at protein level"/>
<organism>
    <name type="scientific">Thermotoga maritima (strain ATCC 43589 / DSM 3109 / JCM 10099 / NBRC 100826 / MSB8)</name>
    <dbReference type="NCBI Taxonomy" id="243274"/>
    <lineage>
        <taxon>Bacteria</taxon>
        <taxon>Thermotogati</taxon>
        <taxon>Thermotogota</taxon>
        <taxon>Thermotogae</taxon>
        <taxon>Thermotogales</taxon>
        <taxon>Thermotogaceae</taxon>
        <taxon>Thermotoga</taxon>
    </lineage>
</organism>
<evidence type="ECO:0000255" key="1">
    <source>
        <dbReference type="HAMAP-Rule" id="MF_00147"/>
    </source>
</evidence>
<evidence type="ECO:0000269" key="2">
    <source>
    </source>
</evidence>
<evidence type="ECO:0000269" key="3">
    <source>
    </source>
</evidence>
<evidence type="ECO:0000269" key="4">
    <source>
    </source>
</evidence>
<evidence type="ECO:0000305" key="5"/>
<evidence type="ECO:0007829" key="6">
    <source>
        <dbReference type="PDB" id="1B9B"/>
    </source>
</evidence>
<evidence type="ECO:0007829" key="7">
    <source>
        <dbReference type="PDB" id="1VPE"/>
    </source>
</evidence>
<accession>P36204</accession>
<accession>Q60031</accession>
<feature type="chain" id="PRO_0000146025" description="Bifunctional PGK/TIM">
    <location>
        <begin position="1"/>
        <end position="654"/>
    </location>
</feature>
<feature type="region of interest" description="Phosphoglycerate kinase">
    <location>
        <begin position="1"/>
        <end position="399"/>
    </location>
</feature>
<feature type="region of interest" description="Triosephosphate isomerase">
    <location>
        <begin position="400"/>
        <end position="654"/>
    </location>
</feature>
<feature type="active site" description="Electrophile" evidence="1">
    <location>
        <position position="495"/>
    </location>
</feature>
<feature type="active site" description="Proton acceptor" evidence="1">
    <location>
        <position position="567"/>
    </location>
</feature>
<feature type="binding site">
    <location>
        <begin position="21"/>
        <end position="23"/>
    </location>
    <ligand>
        <name>substrate</name>
    </ligand>
</feature>
<feature type="binding site" evidence="4">
    <location>
        <position position="36"/>
    </location>
    <ligand>
        <name>substrate</name>
    </ligand>
</feature>
<feature type="binding site">
    <location>
        <begin position="59"/>
        <end position="62"/>
    </location>
    <ligand>
        <name>substrate</name>
    </ligand>
</feature>
<feature type="binding site" evidence="4">
    <location>
        <position position="118"/>
    </location>
    <ligand>
        <name>substrate</name>
    </ligand>
</feature>
<feature type="binding site" evidence="4">
    <location>
        <position position="151"/>
    </location>
    <ligand>
        <name>substrate</name>
    </ligand>
</feature>
<feature type="binding site">
    <location>
        <position position="201"/>
    </location>
    <ligand>
        <name>ATP</name>
        <dbReference type="ChEBI" id="CHEBI:30616"/>
    </ligand>
</feature>
<feature type="binding site">
    <location>
        <position position="293"/>
    </location>
    <ligand>
        <name>ATP</name>
        <dbReference type="ChEBI" id="CHEBI:30616"/>
    </ligand>
</feature>
<feature type="binding site">
    <location>
        <position position="317"/>
    </location>
    <ligand>
        <name>ATP</name>
        <dbReference type="ChEBI" id="CHEBI:30616"/>
    </ligand>
</feature>
<feature type="binding site">
    <location>
        <position position="324"/>
    </location>
    <ligand>
        <name>ATP</name>
        <dbReference type="ChEBI" id="CHEBI:30616"/>
    </ligand>
</feature>
<feature type="binding site">
    <location>
        <begin position="353"/>
        <end position="356"/>
    </location>
    <ligand>
        <name>ATP</name>
        <dbReference type="ChEBI" id="CHEBI:30616"/>
    </ligand>
</feature>
<feature type="binding site" evidence="1">
    <location>
        <begin position="409"/>
        <end position="411"/>
    </location>
    <ligand>
        <name>substrate</name>
    </ligand>
</feature>
<feature type="binding site" evidence="1">
    <location>
        <position position="572"/>
    </location>
    <ligand>
        <name>substrate</name>
    </ligand>
</feature>
<feature type="binding site" evidence="1">
    <location>
        <begin position="634"/>
        <end position="635"/>
    </location>
    <ligand>
        <name>substrate</name>
    </ligand>
</feature>
<feature type="sequence conflict" description="In Ref. 1; CAA53187." evidence="5" ref="1">
    <original>D</original>
    <variation>N</variation>
    <location>
        <position position="213"/>
    </location>
</feature>
<feature type="sequence conflict" description="In Ref. 1; CAA53187." evidence="5" ref="1">
    <original>IAD</original>
    <variation>MRI</variation>
    <location>
        <begin position="394"/>
        <end position="396"/>
    </location>
</feature>
<feature type="sequence conflict" description="In Ref. 1; CAA53187." evidence="5" ref="1">
    <original>K</original>
    <variation>R</variation>
    <location>
        <position position="626"/>
    </location>
</feature>
<feature type="sequence conflict" description="In Ref. 1; CAA53187." evidence="5" ref="1">
    <original>E</original>
    <variation>Q</variation>
    <location>
        <position position="640"/>
    </location>
</feature>
<feature type="helix" evidence="7">
    <location>
        <begin position="6"/>
        <end position="8"/>
    </location>
</feature>
<feature type="strand" evidence="7">
    <location>
        <begin position="15"/>
        <end position="19"/>
    </location>
</feature>
<feature type="strand" evidence="7">
    <location>
        <begin position="30"/>
        <end position="32"/>
    </location>
</feature>
<feature type="helix" evidence="7">
    <location>
        <begin position="35"/>
        <end position="49"/>
    </location>
</feature>
<feature type="strand" evidence="7">
    <location>
        <begin position="53"/>
        <end position="57"/>
    </location>
</feature>
<feature type="helix" evidence="7">
    <location>
        <begin position="69"/>
        <end position="71"/>
    </location>
</feature>
<feature type="helix" evidence="7">
    <location>
        <begin position="74"/>
        <end position="84"/>
    </location>
</feature>
<feature type="strand" evidence="7">
    <location>
        <begin position="89"/>
        <end position="92"/>
    </location>
</feature>
<feature type="strand" evidence="7">
    <location>
        <begin position="94"/>
        <end position="96"/>
    </location>
</feature>
<feature type="helix" evidence="7">
    <location>
        <begin position="97"/>
        <end position="104"/>
    </location>
</feature>
<feature type="strand" evidence="7">
    <location>
        <begin position="111"/>
        <end position="114"/>
    </location>
</feature>
<feature type="helix" evidence="7">
    <location>
        <begin position="117"/>
        <end position="119"/>
    </location>
</feature>
<feature type="helix" evidence="7">
    <location>
        <begin position="122"/>
        <end position="125"/>
    </location>
</feature>
<feature type="helix" evidence="7">
    <location>
        <begin position="128"/>
        <end position="135"/>
    </location>
</feature>
<feature type="strand" evidence="7">
    <location>
        <begin position="139"/>
        <end position="143"/>
    </location>
</feature>
<feature type="helix" evidence="7">
    <location>
        <begin position="146"/>
        <end position="148"/>
    </location>
</feature>
<feature type="turn" evidence="7">
    <location>
        <begin position="154"/>
        <end position="157"/>
    </location>
</feature>
<feature type="helix" evidence="7">
    <location>
        <begin position="158"/>
        <end position="161"/>
    </location>
</feature>
<feature type="strand" evidence="7">
    <location>
        <begin position="165"/>
        <end position="167"/>
    </location>
</feature>
<feature type="helix" evidence="7">
    <location>
        <begin position="169"/>
        <end position="183"/>
    </location>
</feature>
<feature type="strand" evidence="7">
    <location>
        <begin position="187"/>
        <end position="193"/>
    </location>
</feature>
<feature type="helix" evidence="7">
    <location>
        <begin position="198"/>
        <end position="208"/>
    </location>
</feature>
<feature type="turn" evidence="7">
    <location>
        <begin position="209"/>
        <end position="211"/>
    </location>
</feature>
<feature type="strand" evidence="7">
    <location>
        <begin position="213"/>
        <end position="217"/>
    </location>
</feature>
<feature type="turn" evidence="7">
    <location>
        <begin position="219"/>
        <end position="221"/>
    </location>
</feature>
<feature type="helix" evidence="7">
    <location>
        <begin position="222"/>
        <end position="228"/>
    </location>
</feature>
<feature type="helix" evidence="7">
    <location>
        <begin position="240"/>
        <end position="242"/>
    </location>
</feature>
<feature type="helix" evidence="7">
    <location>
        <begin position="243"/>
        <end position="255"/>
    </location>
</feature>
<feature type="strand" evidence="7">
    <location>
        <begin position="259"/>
        <end position="261"/>
    </location>
</feature>
<feature type="strand" evidence="7">
    <location>
        <begin position="264"/>
        <end position="271"/>
    </location>
</feature>
<feature type="strand" evidence="7">
    <location>
        <begin position="279"/>
        <end position="282"/>
    </location>
</feature>
<feature type="turn" evidence="7">
    <location>
        <begin position="283"/>
        <end position="285"/>
    </location>
</feature>
<feature type="strand" evidence="7">
    <location>
        <begin position="292"/>
        <end position="296"/>
    </location>
</feature>
<feature type="helix" evidence="7">
    <location>
        <begin position="298"/>
        <end position="308"/>
    </location>
</feature>
<feature type="strand" evidence="7">
    <location>
        <begin position="312"/>
        <end position="318"/>
    </location>
</feature>
<feature type="helix" evidence="7">
    <location>
        <begin position="326"/>
        <end position="328"/>
    </location>
</feature>
<feature type="helix" evidence="7">
    <location>
        <begin position="330"/>
        <end position="344"/>
    </location>
</feature>
<feature type="strand" evidence="7">
    <location>
        <begin position="348"/>
        <end position="353"/>
    </location>
</feature>
<feature type="helix" evidence="7">
    <location>
        <begin position="354"/>
        <end position="362"/>
    </location>
</feature>
<feature type="helix" evidence="7">
    <location>
        <begin position="366"/>
        <end position="368"/>
    </location>
</feature>
<feature type="strand" evidence="7">
    <location>
        <begin position="369"/>
        <end position="374"/>
    </location>
</feature>
<feature type="helix" evidence="7">
    <location>
        <begin position="376"/>
        <end position="383"/>
    </location>
</feature>
<feature type="helix" evidence="7">
    <location>
        <begin position="389"/>
        <end position="392"/>
    </location>
</feature>
<feature type="strand" evidence="6">
    <location>
        <begin position="405"/>
        <end position="409"/>
    </location>
</feature>
<feature type="helix" evidence="6">
    <location>
        <begin position="416"/>
        <end position="429"/>
    </location>
</feature>
<feature type="strand" evidence="6">
    <location>
        <begin position="435"/>
        <end position="441"/>
    </location>
</feature>
<feature type="helix" evidence="6">
    <location>
        <begin position="444"/>
        <end position="446"/>
    </location>
</feature>
<feature type="helix" evidence="6">
    <location>
        <begin position="447"/>
        <end position="454"/>
    </location>
</feature>
<feature type="strand" evidence="6">
    <location>
        <begin position="457"/>
        <end position="464"/>
    </location>
</feature>
<feature type="strand" evidence="6">
    <location>
        <begin position="468"/>
        <end position="473"/>
    </location>
</feature>
<feature type="helix" evidence="6">
    <location>
        <begin position="480"/>
        <end position="484"/>
    </location>
</feature>
<feature type="turn" evidence="6">
    <location>
        <begin position="485"/>
        <end position="487"/>
    </location>
</feature>
<feature type="strand" evidence="6">
    <location>
        <begin position="490"/>
        <end position="494"/>
    </location>
</feature>
<feature type="helix" evidence="6">
    <location>
        <begin position="496"/>
        <end position="500"/>
    </location>
</feature>
<feature type="helix" evidence="6">
    <location>
        <begin position="506"/>
        <end position="518"/>
    </location>
</feature>
<feature type="strand" evidence="6">
    <location>
        <begin position="522"/>
        <end position="527"/>
    </location>
</feature>
<feature type="helix" evidence="6">
    <location>
        <begin position="531"/>
        <end position="536"/>
    </location>
</feature>
<feature type="helix" evidence="6">
    <location>
        <begin position="539"/>
        <end position="551"/>
    </location>
</feature>
<feature type="helix" evidence="6">
    <location>
        <begin position="556"/>
        <end position="559"/>
    </location>
</feature>
<feature type="strand" evidence="6">
    <location>
        <begin position="563"/>
        <end position="566"/>
    </location>
</feature>
<feature type="helix" evidence="6">
    <location>
        <begin position="569"/>
        <end position="571"/>
    </location>
</feature>
<feature type="strand" evidence="6">
    <location>
        <begin position="572"/>
        <end position="575"/>
    </location>
</feature>
<feature type="helix" evidence="6">
    <location>
        <begin position="580"/>
        <end position="597"/>
    </location>
</feature>
<feature type="helix" evidence="6">
    <location>
        <begin position="600"/>
        <end position="605"/>
    </location>
</feature>
<feature type="strand" evidence="6">
    <location>
        <begin position="606"/>
        <end position="613"/>
    </location>
</feature>
<feature type="helix" evidence="6">
    <location>
        <begin position="616"/>
        <end position="619"/>
    </location>
</feature>
<feature type="turn" evidence="6">
    <location>
        <begin position="620"/>
        <end position="622"/>
    </location>
</feature>
<feature type="strand" evidence="6">
    <location>
        <begin position="623"/>
        <end position="625"/>
    </location>
</feature>
<feature type="strand" evidence="6">
    <location>
        <begin position="630"/>
        <end position="634"/>
    </location>
</feature>
<feature type="helix" evidence="6">
    <location>
        <begin position="635"/>
        <end position="637"/>
    </location>
</feature>
<feature type="helix" evidence="6">
    <location>
        <begin position="641"/>
        <end position="649"/>
    </location>
</feature>
<dbReference type="EC" id="2.7.2.3"/>
<dbReference type="EC" id="5.3.1.1"/>
<dbReference type="EMBL" id="X75437">
    <property type="protein sequence ID" value="CAA53187.1"/>
    <property type="molecule type" value="Genomic_DNA"/>
</dbReference>
<dbReference type="EMBL" id="L27492">
    <property type="protein sequence ID" value="AAA67520.1"/>
    <property type="molecule type" value="Genomic_DNA"/>
</dbReference>
<dbReference type="EMBL" id="AE000512">
    <property type="protein sequence ID" value="AAD35771.1"/>
    <property type="molecule type" value="Genomic_DNA"/>
</dbReference>
<dbReference type="PIR" id="G72344">
    <property type="entry name" value="G72344"/>
</dbReference>
<dbReference type="RefSeq" id="NP_228498.1">
    <property type="nucleotide sequence ID" value="NC_000853.1"/>
</dbReference>
<dbReference type="RefSeq" id="WP_004081072.1">
    <property type="nucleotide sequence ID" value="NC_000853.1"/>
</dbReference>
<dbReference type="PDB" id="1B9B">
    <property type="method" value="X-ray"/>
    <property type="resolution" value="2.85 A"/>
    <property type="chains" value="A/B=400-654"/>
</dbReference>
<dbReference type="PDB" id="1VPE">
    <property type="method" value="X-ray"/>
    <property type="resolution" value="2.00 A"/>
    <property type="chains" value="A=2-398"/>
</dbReference>
<dbReference type="PDBsum" id="1B9B"/>
<dbReference type="PDBsum" id="1VPE"/>
<dbReference type="SMR" id="P36204"/>
<dbReference type="FunCoup" id="P36204">
    <property type="interactions" value="339"/>
</dbReference>
<dbReference type="STRING" id="243274.TM_0689"/>
<dbReference type="DrugBank" id="DB04510">
    <property type="generic name" value="3-phospho-D-glyceric acid"/>
</dbReference>
<dbReference type="PaxDb" id="243274-THEMA_01220"/>
<dbReference type="EnsemblBacteria" id="AAD35771">
    <property type="protein sequence ID" value="AAD35771"/>
    <property type="gene ID" value="TM_0689"/>
</dbReference>
<dbReference type="KEGG" id="tma:TM0689"/>
<dbReference type="KEGG" id="tmi:THEMA_01220"/>
<dbReference type="KEGG" id="tmm:Tmari_0689"/>
<dbReference type="KEGG" id="tmw:THMA_0704"/>
<dbReference type="eggNOG" id="COG0126">
    <property type="taxonomic scope" value="Bacteria"/>
</dbReference>
<dbReference type="eggNOG" id="COG0149">
    <property type="taxonomic scope" value="Bacteria"/>
</dbReference>
<dbReference type="InParanoid" id="P36204"/>
<dbReference type="OrthoDB" id="9808460at2"/>
<dbReference type="BioCyc" id="MetaCyc:MONOMER-382"/>
<dbReference type="BRENDA" id="5.3.1.1">
    <property type="organism ID" value="6331"/>
</dbReference>
<dbReference type="SABIO-RK" id="P36204"/>
<dbReference type="UniPathway" id="UPA00109">
    <property type="reaction ID" value="UER00185"/>
</dbReference>
<dbReference type="UniPathway" id="UPA00109">
    <property type="reaction ID" value="UER00189"/>
</dbReference>
<dbReference type="EvolutionaryTrace" id="P36204"/>
<dbReference type="Proteomes" id="UP000008183">
    <property type="component" value="Chromosome"/>
</dbReference>
<dbReference type="GO" id="GO:0005829">
    <property type="term" value="C:cytosol"/>
    <property type="evidence" value="ECO:0000318"/>
    <property type="project" value="GO_Central"/>
</dbReference>
<dbReference type="GO" id="GO:0043531">
    <property type="term" value="F:ADP binding"/>
    <property type="evidence" value="ECO:0000318"/>
    <property type="project" value="GO_Central"/>
</dbReference>
<dbReference type="GO" id="GO:0005524">
    <property type="term" value="F:ATP binding"/>
    <property type="evidence" value="ECO:0000318"/>
    <property type="project" value="GO_Central"/>
</dbReference>
<dbReference type="GO" id="GO:0004618">
    <property type="term" value="F:phosphoglycerate kinase activity"/>
    <property type="evidence" value="ECO:0000318"/>
    <property type="project" value="GO_Central"/>
</dbReference>
<dbReference type="GO" id="GO:0004807">
    <property type="term" value="F:triose-phosphate isomerase activity"/>
    <property type="evidence" value="ECO:0007669"/>
    <property type="project" value="UniProtKB-UniRule"/>
</dbReference>
<dbReference type="GO" id="GO:0006633">
    <property type="term" value="P:fatty acid biosynthetic process"/>
    <property type="evidence" value="ECO:0007669"/>
    <property type="project" value="UniProtKB-KW"/>
</dbReference>
<dbReference type="GO" id="GO:0006094">
    <property type="term" value="P:gluconeogenesis"/>
    <property type="evidence" value="ECO:0000318"/>
    <property type="project" value="GO_Central"/>
</dbReference>
<dbReference type="GO" id="GO:0006096">
    <property type="term" value="P:glycolytic process"/>
    <property type="evidence" value="ECO:0000318"/>
    <property type="project" value="GO_Central"/>
</dbReference>
<dbReference type="CDD" id="cd00318">
    <property type="entry name" value="Phosphoglycerate_kinase"/>
    <property type="match status" value="1"/>
</dbReference>
<dbReference type="CDD" id="cd00311">
    <property type="entry name" value="TIM"/>
    <property type="match status" value="1"/>
</dbReference>
<dbReference type="FunFam" id="3.40.50.1260:FF:000007">
    <property type="entry name" value="Phosphoglycerate kinase"/>
    <property type="match status" value="1"/>
</dbReference>
<dbReference type="FunFam" id="3.40.50.1260:FF:000008">
    <property type="entry name" value="Phosphoglycerate kinase"/>
    <property type="match status" value="1"/>
</dbReference>
<dbReference type="FunFam" id="3.20.20.70:FF:000016">
    <property type="entry name" value="Triosephosphate isomerase"/>
    <property type="match status" value="1"/>
</dbReference>
<dbReference type="Gene3D" id="3.20.20.70">
    <property type="entry name" value="Aldolase class I"/>
    <property type="match status" value="1"/>
</dbReference>
<dbReference type="Gene3D" id="3.40.50.1260">
    <property type="entry name" value="Phosphoglycerate kinase, N-terminal domain"/>
    <property type="match status" value="2"/>
</dbReference>
<dbReference type="HAMAP" id="MF_00145">
    <property type="entry name" value="Phosphoglyc_kinase"/>
    <property type="match status" value="1"/>
</dbReference>
<dbReference type="HAMAP" id="MF_00147_B">
    <property type="entry name" value="TIM_B"/>
    <property type="match status" value="1"/>
</dbReference>
<dbReference type="InterPro" id="IPR013785">
    <property type="entry name" value="Aldolase_TIM"/>
</dbReference>
<dbReference type="InterPro" id="IPR001576">
    <property type="entry name" value="Phosphoglycerate_kinase"/>
</dbReference>
<dbReference type="InterPro" id="IPR015911">
    <property type="entry name" value="Phosphoglycerate_kinase_CS"/>
</dbReference>
<dbReference type="InterPro" id="IPR015824">
    <property type="entry name" value="Phosphoglycerate_kinase_N"/>
</dbReference>
<dbReference type="InterPro" id="IPR036043">
    <property type="entry name" value="Phosphoglycerate_kinase_sf"/>
</dbReference>
<dbReference type="InterPro" id="IPR035990">
    <property type="entry name" value="TIM_sf"/>
</dbReference>
<dbReference type="InterPro" id="IPR022896">
    <property type="entry name" value="TrioseP_Isoase_bac/euk"/>
</dbReference>
<dbReference type="InterPro" id="IPR000652">
    <property type="entry name" value="Triosephosphate_isomerase"/>
</dbReference>
<dbReference type="InterPro" id="IPR020861">
    <property type="entry name" value="Triosephosphate_isomerase_AS"/>
</dbReference>
<dbReference type="NCBIfam" id="NF010569">
    <property type="entry name" value="PRK13962.1"/>
    <property type="match status" value="1"/>
</dbReference>
<dbReference type="NCBIfam" id="TIGR00419">
    <property type="entry name" value="tim"/>
    <property type="match status" value="1"/>
</dbReference>
<dbReference type="PANTHER" id="PTHR11406">
    <property type="entry name" value="PHOSPHOGLYCERATE KINASE"/>
    <property type="match status" value="1"/>
</dbReference>
<dbReference type="PANTHER" id="PTHR11406:SF23">
    <property type="entry name" value="PHOSPHOGLYCERATE KINASE 1, CHLOROPLASTIC-RELATED"/>
    <property type="match status" value="1"/>
</dbReference>
<dbReference type="Pfam" id="PF00162">
    <property type="entry name" value="PGK"/>
    <property type="match status" value="1"/>
</dbReference>
<dbReference type="Pfam" id="PF00121">
    <property type="entry name" value="TIM"/>
    <property type="match status" value="1"/>
</dbReference>
<dbReference type="PRINTS" id="PR00477">
    <property type="entry name" value="PHGLYCKINASE"/>
</dbReference>
<dbReference type="SUPFAM" id="SSF53748">
    <property type="entry name" value="Phosphoglycerate kinase"/>
    <property type="match status" value="1"/>
</dbReference>
<dbReference type="SUPFAM" id="SSF51351">
    <property type="entry name" value="Triosephosphate isomerase (TIM)"/>
    <property type="match status" value="1"/>
</dbReference>
<dbReference type="PROSITE" id="PS00111">
    <property type="entry name" value="PGLYCERATE_KINASE"/>
    <property type="match status" value="1"/>
</dbReference>
<dbReference type="PROSITE" id="PS00171">
    <property type="entry name" value="TIM_1"/>
    <property type="match status" value="1"/>
</dbReference>
<dbReference type="PROSITE" id="PS51440">
    <property type="entry name" value="TIM_2"/>
    <property type="match status" value="1"/>
</dbReference>
<keyword id="KW-0002">3D-structure</keyword>
<keyword id="KW-0067">ATP-binding</keyword>
<keyword id="KW-0963">Cytoplasm</keyword>
<keyword id="KW-0275">Fatty acid biosynthesis</keyword>
<keyword id="KW-0276">Fatty acid metabolism</keyword>
<keyword id="KW-0312">Gluconeogenesis</keyword>
<keyword id="KW-0324">Glycolysis</keyword>
<keyword id="KW-0413">Isomerase</keyword>
<keyword id="KW-0418">Kinase</keyword>
<keyword id="KW-0444">Lipid biosynthesis</keyword>
<keyword id="KW-0443">Lipid metabolism</keyword>
<keyword id="KW-0511">Multifunctional enzyme</keyword>
<keyword id="KW-0547">Nucleotide-binding</keyword>
<keyword id="KW-1185">Reference proteome</keyword>
<keyword id="KW-0808">Transferase</keyword>
<gene>
    <name type="primary">pgk/tpi</name>
    <name type="ordered locus">TM_0689</name>
</gene>
<protein>
    <recommendedName>
        <fullName>Bifunctional PGK/TIM</fullName>
    </recommendedName>
    <domain>
        <recommendedName>
            <fullName>Phosphoglycerate kinase</fullName>
            <ecNumber>2.7.2.3</ecNumber>
        </recommendedName>
    </domain>
    <domain>
        <recommendedName>
            <fullName>Triosephosphate isomerase</fullName>
            <shortName>TIM</shortName>
            <ecNumber>5.3.1.1</ecNumber>
        </recommendedName>
        <alternativeName>
            <fullName>Triose-phosphate isomerase</fullName>
        </alternativeName>
    </domain>
</protein>
<comment type="catalytic activity">
    <reaction>
        <text>(2R)-3-phosphoglycerate + ATP = (2R)-3-phospho-glyceroyl phosphate + ADP</text>
        <dbReference type="Rhea" id="RHEA:14801"/>
        <dbReference type="ChEBI" id="CHEBI:30616"/>
        <dbReference type="ChEBI" id="CHEBI:57604"/>
        <dbReference type="ChEBI" id="CHEBI:58272"/>
        <dbReference type="ChEBI" id="CHEBI:456216"/>
        <dbReference type="EC" id="2.7.2.3"/>
    </reaction>
</comment>
<comment type="catalytic activity">
    <reaction>
        <text>D-glyceraldehyde 3-phosphate = dihydroxyacetone phosphate</text>
        <dbReference type="Rhea" id="RHEA:18585"/>
        <dbReference type="ChEBI" id="CHEBI:57642"/>
        <dbReference type="ChEBI" id="CHEBI:59776"/>
        <dbReference type="EC" id="5.3.1.1"/>
    </reaction>
</comment>
<comment type="pathway">
    <text>Carbohydrate degradation; glycolysis; D-glyceraldehyde 3-phosphate from glycerone phosphate: step 1/1.</text>
</comment>
<comment type="pathway">
    <text>Carbohydrate degradation; glycolysis; pyruvate from D-glyceraldehyde 3-phosphate: step 2/5.</text>
</comment>
<comment type="subunit">
    <text evidence="2 3 4">Monomer (PGK) and homotetramer (PGK-TIM).</text>
</comment>
<comment type="subcellular location">
    <subcellularLocation>
        <location>Cytoplasm</location>
    </subcellularLocation>
</comment>
<comment type="similarity">
    <text evidence="5">In the N-terminal section; belongs to the phosphoglycerate kinase family.</text>
</comment>
<comment type="similarity">
    <text evidence="5">In the C-terminal section; belongs to the triosephosphate isomerase family.</text>
</comment>
<sequence length="654" mass="71585">MEKMTIRDVDLKGKRVIMRVDFNVPVKDGVVQDDTRIRAALPTIKYALEQGAKVILLSHLGRPKGEPSPEFSLAPVAKRLSELLGKEVKFVPAVVGDEVKKAVEELKEGEVLLLENTRFHPGETKNDPELAKFWASLADIHVNDAFGTAHRAHASNVGIAQFIPSVAGFLMEKEIKFLSKVTYNPEKPYVVVLGGAKVSDKIGVITNLMEKADRILIGGAMMFTFLKALGKEVGSSRVEEDKIDLAKELLEKAKEKGVEIVLPVDAVIAQKIEPGVEKKVVRIDDGIPEGWMGLDIGPETIELFKQKLSDAKTVVWNGPMGVFEIDDFAEGTKQVALAIAALTEKGAITVVGGGDSAAAVNKFGLEDKFSHVSTGGGASLEFLEGKELPGIASIADKKKITRKLILAGNWKMHKTISEAKKFVSLLVNELHDVKEFEIVVCPPFTALSEVGEILSGRNIKLGAQNVFYEDQGAFTGEISPLMLQEIGVEYVIVGHSERRRIFKEDDEFINRKVKAVLEKGMTPILCVGETLEEREKGLTFCVVEKQVREGFYGLDKEEAKRVVIAYEPVWAIGTGRVATPQQAQEVHAFIRKLLSEMYDEETAGSIRILYGGSIKPDNFLGLIVQKDIDGGLVGGASLKESFIELARIMRGVIS</sequence>
<reference key="1">
    <citation type="journal article" date="1995" name="EMBO J.">
        <title>Phosphoglycerate kinase and triosephosphate isomerase from the hyperthermophilic bacterium Thermotoga maritima form a covalent bifunctional enzyme complex.</title>
        <authorList>
            <person name="Schurig H."/>
            <person name="Beaucamp N."/>
            <person name="Ostendorp R."/>
            <person name="Jaenicke R."/>
            <person name="Adler E."/>
            <person name="Knowles J.R."/>
        </authorList>
    </citation>
    <scope>NUCLEOTIDE SEQUENCE [GENOMIC DNA]</scope>
    <scope>SUBUNIT</scope>
    <source>
        <strain>ATCC 43589 / DSM 3109 / JCM 10099 / NBRC 100826 / MSB8</strain>
    </source>
</reference>
<reference key="2">
    <citation type="journal article" date="1999" name="Nature">
        <title>Evidence for lateral gene transfer between Archaea and Bacteria from genome sequence of Thermotoga maritima.</title>
        <authorList>
            <person name="Nelson K.E."/>
            <person name="Clayton R.A."/>
            <person name="Gill S.R."/>
            <person name="Gwinn M.L."/>
            <person name="Dodson R.J."/>
            <person name="Haft D.H."/>
            <person name="Hickey E.K."/>
            <person name="Peterson J.D."/>
            <person name="Nelson W.C."/>
            <person name="Ketchum K.A."/>
            <person name="McDonald L.A."/>
            <person name="Utterback T.R."/>
            <person name="Malek J.A."/>
            <person name="Linher K.D."/>
            <person name="Garrett M.M."/>
            <person name="Stewart A.M."/>
            <person name="Cotton M.D."/>
            <person name="Pratt M.S."/>
            <person name="Phillips C.A."/>
            <person name="Richardson D.L."/>
            <person name="Heidelberg J.F."/>
            <person name="Sutton G.G."/>
            <person name="Fleischmann R.D."/>
            <person name="Eisen J.A."/>
            <person name="White O."/>
            <person name="Salzberg S.L."/>
            <person name="Smith H.O."/>
            <person name="Venter J.C."/>
            <person name="Fraser C.M."/>
        </authorList>
    </citation>
    <scope>NUCLEOTIDE SEQUENCE [LARGE SCALE GENOMIC DNA]</scope>
    <source>
        <strain>ATCC 43589 / DSM 3109 / JCM 10099 / NBRC 100826 / MSB8</strain>
    </source>
</reference>
<reference key="3">
    <citation type="journal article" date="1997" name="Structure">
        <title>Closed structure of phosphoglycerate kinase from Thermotoga maritima reveals the catalytic mechanism and determinants of thermal stability.</title>
        <authorList>
            <person name="Auerbach G."/>
            <person name="Huber R."/>
            <person name="Graettinger M."/>
            <person name="Zaiss K."/>
            <person name="Schurig H."/>
            <person name="Jaenicke R."/>
            <person name="Jacob U."/>
        </authorList>
    </citation>
    <scope>X-RAY CRYSTALLOGRAPHY (2.0 ANGSTROMS) OF 2-393 IN COMPLEX WITH SUBSTRATE AND ATP ANALOG</scope>
    <scope>SEQUENCE REVISION</scope>
    <source>
        <strain>ATCC 43589 / DSM 3109 / JCM 10099 / NBRC 100826 / MSB8</strain>
    </source>
</reference>
<reference key="4">
    <citation type="journal article" date="1999" name="Proteins">
        <title>The crystal structure of triosephosphate isomerase (TIM) from Thermotoga maritima: a comparative thermostability structural analysis of ten different TIM structures.</title>
        <authorList>
            <person name="Maes D."/>
            <person name="Zeelen J.P."/>
            <person name="Thanki N."/>
            <person name="Beaucamp N."/>
            <person name="Alvarez M."/>
            <person name="Thi M.H."/>
            <person name="Backmann J."/>
            <person name="Martial J.A."/>
            <person name="Wyns L."/>
            <person name="Jaenicke R."/>
            <person name="Wierenga R.K."/>
        </authorList>
    </citation>
    <scope>X-RAY CRYSTALLOGRAPHY (2.85 ANGSTROMS) OF 400-654</scope>
    <scope>SUBUNIT</scope>
</reference>